<comment type="function">
    <molecule>Nuclear inclusion protein B</molecule>
    <text>An RNA-dependent RNA polymerase that plays an essential role in the virus replication.</text>
</comment>
<comment type="function">
    <molecule>Capsid protein</molecule>
    <text evidence="2">Involved in aphid transmission, cell-to-cell and systemis movement, encapsidation of the viral RNA and in the regulation of viral RNA amplification.</text>
</comment>
<comment type="catalytic activity">
    <reaction evidence="3">
        <text>RNA(n) + a ribonucleoside 5'-triphosphate = RNA(n+1) + diphosphate</text>
        <dbReference type="Rhea" id="RHEA:21248"/>
        <dbReference type="Rhea" id="RHEA-COMP:14527"/>
        <dbReference type="Rhea" id="RHEA-COMP:17342"/>
        <dbReference type="ChEBI" id="CHEBI:33019"/>
        <dbReference type="ChEBI" id="CHEBI:61557"/>
        <dbReference type="ChEBI" id="CHEBI:140395"/>
        <dbReference type="EC" id="2.7.7.48"/>
    </reaction>
</comment>
<comment type="subcellular location">
    <molecule>Capsid protein</molecule>
    <subcellularLocation>
        <location evidence="5">Virion</location>
    </subcellularLocation>
</comment>
<comment type="PTM">
    <text evidence="1">Genome polyprotein of potyviruses undergoes post-translational proteolytic processing by the main proteinase NIa-pro resulting in the production of at least ten individual proteins. The P1 proteinase and the HC-pro cleave only their respective C-termini autocatalytically. 6K1 is essential for proper proteolytic separation of P3 from CI (By similarity).</text>
</comment>
<comment type="similarity">
    <text evidence="5">Belongs to the potyviridae genome polyprotein family.</text>
</comment>
<organismHost>
    <name type="scientific">Sorghum halepense</name>
    <name type="common">Johnson grass</name>
    <name type="synonym">Holcus halepensis</name>
    <dbReference type="NCBI Taxonomy" id="4560"/>
</organismHost>
<organismHost>
    <name type="scientific">Zea mays</name>
    <name type="common">Maize</name>
    <dbReference type="NCBI Taxonomy" id="4577"/>
</organismHost>
<feature type="chain" id="PRO_0000040289" description="Nuclear inclusion protein B" evidence="1">
    <location>
        <begin position="1" status="less than"/>
        <end position="52"/>
    </location>
</feature>
<feature type="chain" id="PRO_0000420001" description="Genome polyprotein">
    <location>
        <begin position="1"/>
        <end position="380"/>
    </location>
</feature>
<feature type="chain" id="PRO_0000040290" description="Capsid protein" evidence="1">
    <location>
        <begin position="53"/>
        <end position="380"/>
    </location>
</feature>
<feature type="region of interest" description="Disordered" evidence="4">
    <location>
        <begin position="54"/>
        <end position="154"/>
    </location>
</feature>
<feature type="region of interest" description="Disordered" evidence="4">
    <location>
        <begin position="349"/>
        <end position="380"/>
    </location>
</feature>
<feature type="compositionally biased region" description="Low complexity" evidence="4">
    <location>
        <begin position="67"/>
        <end position="84"/>
    </location>
</feature>
<feature type="compositionally biased region" description="Gly residues" evidence="4">
    <location>
        <begin position="85"/>
        <end position="99"/>
    </location>
</feature>
<feature type="compositionally biased region" description="Gly residues" evidence="4">
    <location>
        <begin position="106"/>
        <end position="123"/>
    </location>
</feature>
<feature type="compositionally biased region" description="Low complexity" evidence="4">
    <location>
        <begin position="129"/>
        <end position="140"/>
    </location>
</feature>
<feature type="site" description="Cleavage; by NIa-pro" evidence="1">
    <location>
        <begin position="52"/>
        <end position="53"/>
    </location>
</feature>
<feature type="non-terminal residue">
    <location>
        <position position="1"/>
    </location>
</feature>
<protein>
    <recommendedName>
        <fullName>Genome polyprotein</fullName>
    </recommendedName>
    <component>
        <recommendedName>
            <fullName>Nuclear inclusion protein B</fullName>
            <shortName>NI-B</shortName>
            <shortName>NIB</shortName>
        </recommendedName>
        <alternativeName>
            <fullName>RNA-directed RNA polymerase</fullName>
            <ecNumber>2.7.7.48</ecNumber>
        </alternativeName>
    </component>
    <component>
        <recommendedName>
            <fullName>Capsid protein</fullName>
            <shortName>CP</shortName>
        </recommendedName>
        <alternativeName>
            <fullName>Coat protein</fullName>
        </alternativeName>
    </component>
</protein>
<proteinExistence type="evidence at transcript level"/>
<accession>P32652</accession>
<evidence type="ECO:0000250" key="1"/>
<evidence type="ECO:0000250" key="2">
    <source>
        <dbReference type="UniProtKB" id="P04517"/>
    </source>
</evidence>
<evidence type="ECO:0000255" key="3">
    <source>
        <dbReference type="PROSITE-ProRule" id="PRU00539"/>
    </source>
</evidence>
<evidence type="ECO:0000256" key="4">
    <source>
        <dbReference type="SAM" id="MobiDB-lite"/>
    </source>
</evidence>
<evidence type="ECO:0000305" key="5"/>
<keyword id="KW-0167">Capsid protein</keyword>
<keyword id="KW-0548">Nucleotidyltransferase</keyword>
<keyword id="KW-0696">RNA-directed RNA polymerase</keyword>
<keyword id="KW-0808">Transferase</keyword>
<keyword id="KW-0946">Virion</keyword>
<dbReference type="EC" id="2.7.7.48"/>
<dbReference type="EMBL" id="D00949">
    <property type="protein sequence ID" value="BAA00797.1"/>
    <property type="molecule type" value="mRNA"/>
</dbReference>
<dbReference type="PIR" id="PH0208">
    <property type="entry name" value="GNVSMB"/>
</dbReference>
<dbReference type="SMR" id="P32652"/>
<dbReference type="GO" id="GO:0019028">
    <property type="term" value="C:viral capsid"/>
    <property type="evidence" value="ECO:0007669"/>
    <property type="project" value="UniProtKB-KW"/>
</dbReference>
<dbReference type="GO" id="GO:0003968">
    <property type="term" value="F:RNA-directed RNA polymerase activity"/>
    <property type="evidence" value="ECO:0007669"/>
    <property type="project" value="UniProtKB-KW"/>
</dbReference>
<dbReference type="InterPro" id="IPR001592">
    <property type="entry name" value="Poty_coat"/>
</dbReference>
<dbReference type="Pfam" id="PF00767">
    <property type="entry name" value="Poty_coat"/>
    <property type="match status" value="1"/>
</dbReference>
<name>POLG_MDMV</name>
<reference key="1">
    <citation type="journal article" date="1991" name="J. Gen. Virol.">
        <title>Unexpected sequence diversity in the amino-terminal ends of the coat proteins of strains of sugarcane mosaic virus.</title>
        <authorList>
            <person name="Frenkel M.J."/>
            <person name="Jilka J.M."/>
            <person name="McKern N.M."/>
            <person name="Strike P.M."/>
            <person name="Clark J.M. Jr."/>
            <person name="Shukla D.D."/>
            <person name="Ward C.W."/>
        </authorList>
    </citation>
    <scope>NUCLEOTIDE SEQUENCE [MRNA]</scope>
    <source>
        <strain>B</strain>
    </source>
</reference>
<reference key="2">
    <citation type="journal article" date="2001" name="Virus Res.">
        <title>Potyvirus proteins: a wealth of functions.</title>
        <authorList>
            <person name="Urcuqui-Inchima S."/>
            <person name="Haenni A.L."/>
            <person name="Bernardi F."/>
        </authorList>
    </citation>
    <scope>REVIEW</scope>
</reference>
<organism>
    <name type="scientific">Maize dwarf mosaic virus</name>
    <name type="common">MDMV</name>
    <dbReference type="NCBI Taxonomy" id="12203"/>
    <lineage>
        <taxon>Viruses</taxon>
        <taxon>Riboviria</taxon>
        <taxon>Orthornavirae</taxon>
        <taxon>Pisuviricota</taxon>
        <taxon>Stelpaviricetes</taxon>
        <taxon>Patatavirales</taxon>
        <taxon>Potyviridae</taxon>
        <taxon>Potyvirus</taxon>
        <taxon>Potyvirus zeananus</taxon>
    </lineage>
</organism>
<sequence length="380" mass="41120">KEGLAPYIAETALRNLYLGTGIKEEEIEKYLKQFIKDLPGYIEDYNEDVFHQSGTVDAGAQGGSGSQGTTPPATGSGAKPATSGAGSGSGTGAGTGVTGGQARTGSGTGTGSGATGGQSGSGSGTEQVNTGSAGTNATGGQRDRDVDAGSTGKISVPKLKAMSKKMRLPKAKAKDVLHLDFLLTYKPQQQDISNTRATKEEFDRWYDAYKKEYEIDDTQMTVVMSGLMVWCIENGCSPNINGNWTMMDKDEQRVFPLKPVIENASPTFRQIMHHFSDAAEAYIEYRNSTERYMPRYGLQRNISDYSLARYAFDFYEMTSRTPARAKEAHMQMKAAAVRGSNTRLFGLDGNVGETQENTERHTAGDVSRNMHSLLGVQQHH</sequence>